<sequence length="541" mass="63038">MEALLEGIQNRGHGGGFLTSCEAELQELMKQIDIMVAHKKSEWEGRTHALETCLKIREQELKSLRSQLDVTHKEVGMLHQQVEEHEKIKQEMTMEYKQELKKLHEELGILKRSYEKLQKKQMREFRGNTKNHREDRSEIERLTAKIEEFRQKSLDWEKQRLIYQQQVSSLEAQRKALAEQSEIIQAQLANRKQKLESVELSSQSEIQHLSSKLERANDTICANELEIERLTMRVNDLVGTSMTVLQEQQQKEEKLRESEKLLEALQEEKRELKAALQSQENLIHEARIQKEKLQEKVKATDTQHAVEAIRPREESPAEKKYTSQGQGDLDSVLFQLNFTHTSEDLLQAEVTRLEGSLESVSATCKQLSQELMEKYEELKRMEAHNNEYKAEIKKLKEQILQGEQSYSSALEGMKMEISHLTQELHQRDITIASTKGSSSDMEKRLRAEMQKAEDKAVEHKEILDQLESLKLENRHLSEMVMKLELGLHECSLPVSPLGSIATRFLEEEELRSHHILERLDAHIEELKRESEKTVRQFTALK</sequence>
<comment type="function">
    <text evidence="2">Required for normal spindle assembly. Plays a key role in mother-centriole-dependent centriole duplication; the function seems also to involve CEP152, CDK5RAP2 and WDR62 through a stepwise assembled complex at the centrosome that recruits CDK2 required for centriole duplication. Reported to be required for centrosomal recruitment of CEP152; however, this function has been questioned. Also recruits CDK1 to centrosomes. Plays a role in DNA damage response. Following DNA damage, such as double-strand breaks (DSBs), is removed from centrosomes; this leads to the inactivation of spindle assembly and delay in mitotic progression. Promotes stabilization of FXR1 protein by inhibiting FXR1 ubiquitination.</text>
</comment>
<comment type="subunit">
    <text evidence="2">Interacts with CEP152 and CDK1; these interactions recruit both ligands to centrosomes. Interacts with CDK2, CDK5RAP2, WDR62, CEP90, KIAA0753/moonraker and CCDC14. CEP63, CDK5RAP2, CEP152, WDR62 are proposed to form a stepwise assembled complex at the centrosome forming a ring near parental centrioles. Interacts with CCDC57; the interaction is required for their location to proximal end of centrioles. Interacts with FXR1; promoting its stabilization.</text>
</comment>
<comment type="subcellular location">
    <subcellularLocation>
        <location evidence="1 2">Cytoplasm</location>
        <location evidence="1 2">Cytoskeleton</location>
        <location evidence="1 2">Microtubule organizing center</location>
        <location evidence="1 2">Centrosome</location>
    </subcellularLocation>
    <subcellularLocation>
        <location evidence="1 2">Cytoplasm</location>
        <location evidence="1 2">Cytoskeleton</location>
        <location evidence="1 2">Microtubule organizing center</location>
        <location evidence="1 2">Centrosome</location>
        <location evidence="1 2">Centriole</location>
    </subcellularLocation>
    <subcellularLocation>
        <location evidence="2">Cytoplasm</location>
        <location evidence="2">Cytoskeleton</location>
        <location evidence="2">Microtubule organizing center</location>
        <location evidence="2">Centrosome</location>
        <location evidence="2">Centriolar satellite</location>
    </subcellularLocation>
    <text evidence="1 2">Colocalizes with CDK5RAP2, CEP152 and WDR62 in a discrete ring around the proximal end of the parental centriole. At this site, a cohesive structure is predicted to engage parental centrioles and procentrioles (By similarity).</text>
</comment>
<comment type="PTM">
    <text evidence="2">Polyubiquitinated via 'Lys-48'-linked ubiquitin, leading to its degradation. Deubiquitinated by USP36, promoting its stabilization.</text>
</comment>
<comment type="similarity">
    <text evidence="5">Belongs to the CEP63 family.</text>
</comment>
<name>CEP63_PONAB</name>
<proteinExistence type="evidence at transcript level"/>
<dbReference type="EMBL" id="CR925979">
    <property type="protein sequence ID" value="CAI29627.1"/>
    <property type="molecule type" value="mRNA"/>
</dbReference>
<dbReference type="RefSeq" id="NP_001127080.1">
    <property type="nucleotide sequence ID" value="NM_001133608.1"/>
</dbReference>
<dbReference type="SMR" id="Q5NVN6"/>
<dbReference type="FunCoup" id="Q5NVN6">
    <property type="interactions" value="1203"/>
</dbReference>
<dbReference type="STRING" id="9601.ENSPPYP00000015800"/>
<dbReference type="Ensembl" id="ENSPPYT00000016423.2">
    <property type="protein sequence ID" value="ENSPPYP00000015800.1"/>
    <property type="gene ID" value="ENSPPYG00000014122.2"/>
</dbReference>
<dbReference type="GeneID" id="100174110"/>
<dbReference type="KEGG" id="pon:100174110"/>
<dbReference type="CTD" id="80254"/>
<dbReference type="eggNOG" id="ENOG502QRYU">
    <property type="taxonomic scope" value="Eukaryota"/>
</dbReference>
<dbReference type="GeneTree" id="ENSGT00940000153190"/>
<dbReference type="HOGENOM" id="CLU_027471_0_0_1"/>
<dbReference type="InParanoid" id="Q5NVN6"/>
<dbReference type="OrthoDB" id="10007333at2759"/>
<dbReference type="TreeFam" id="TF330595"/>
<dbReference type="Proteomes" id="UP000001595">
    <property type="component" value="Chromosome 3"/>
</dbReference>
<dbReference type="GO" id="GO:0034451">
    <property type="term" value="C:centriolar satellite"/>
    <property type="evidence" value="ECO:0007669"/>
    <property type="project" value="UniProtKB-SubCell"/>
</dbReference>
<dbReference type="GO" id="GO:0005814">
    <property type="term" value="C:centriole"/>
    <property type="evidence" value="ECO:0000250"/>
    <property type="project" value="UniProtKB"/>
</dbReference>
<dbReference type="GO" id="GO:0005813">
    <property type="term" value="C:centrosome"/>
    <property type="evidence" value="ECO:0000250"/>
    <property type="project" value="UniProtKB"/>
</dbReference>
<dbReference type="GO" id="GO:0005737">
    <property type="term" value="C:cytoplasm"/>
    <property type="evidence" value="ECO:0007669"/>
    <property type="project" value="UniProtKB-KW"/>
</dbReference>
<dbReference type="GO" id="GO:0000922">
    <property type="term" value="C:spindle pole"/>
    <property type="evidence" value="ECO:0000250"/>
    <property type="project" value="UniProtKB"/>
</dbReference>
<dbReference type="GO" id="GO:0051301">
    <property type="term" value="P:cell division"/>
    <property type="evidence" value="ECO:0007669"/>
    <property type="project" value="UniProtKB-KW"/>
</dbReference>
<dbReference type="GO" id="GO:0007099">
    <property type="term" value="P:centriole replication"/>
    <property type="evidence" value="ECO:0000250"/>
    <property type="project" value="UniProtKB"/>
</dbReference>
<dbReference type="GO" id="GO:0098535">
    <property type="term" value="P:de novo centriole assembly involved in multi-ciliated epithelial cell differentiation"/>
    <property type="evidence" value="ECO:0007669"/>
    <property type="project" value="TreeGrafter"/>
</dbReference>
<dbReference type="GO" id="GO:0000077">
    <property type="term" value="P:DNA damage checkpoint signaling"/>
    <property type="evidence" value="ECO:0000250"/>
    <property type="project" value="UniProtKB"/>
</dbReference>
<dbReference type="GO" id="GO:1900045">
    <property type="term" value="P:negative regulation of protein K63-linked ubiquitination"/>
    <property type="evidence" value="ECO:0000250"/>
    <property type="project" value="UniProtKB"/>
</dbReference>
<dbReference type="GO" id="GO:0050821">
    <property type="term" value="P:protein stabilization"/>
    <property type="evidence" value="ECO:0000250"/>
    <property type="project" value="UniProtKB"/>
</dbReference>
<dbReference type="GO" id="GO:0042770">
    <property type="term" value="P:signal transduction in response to DNA damage"/>
    <property type="evidence" value="ECO:0000250"/>
    <property type="project" value="UniProtKB"/>
</dbReference>
<dbReference type="GO" id="GO:0051225">
    <property type="term" value="P:spindle assembly"/>
    <property type="evidence" value="ECO:0000250"/>
    <property type="project" value="UniProtKB"/>
</dbReference>
<dbReference type="Gene3D" id="1.20.5.340">
    <property type="match status" value="1"/>
</dbReference>
<dbReference type="InterPro" id="IPR031470">
    <property type="entry name" value="Cep63/Deup1_N"/>
</dbReference>
<dbReference type="PANTHER" id="PTHR18875:SF7">
    <property type="entry name" value="CENTROSOMAL PROTEIN OF 63 KDA"/>
    <property type="match status" value="1"/>
</dbReference>
<dbReference type="PANTHER" id="PTHR18875">
    <property type="entry name" value="SARCOMA ANTIGEN NY-SAR-24/CYTOSKELETAL PROTEIN SOJO"/>
    <property type="match status" value="1"/>
</dbReference>
<dbReference type="Pfam" id="PF17045">
    <property type="entry name" value="CEP63"/>
    <property type="match status" value="1"/>
</dbReference>
<accession>Q5NVN6</accession>
<organism>
    <name type="scientific">Pongo abelii</name>
    <name type="common">Sumatran orangutan</name>
    <name type="synonym">Pongo pygmaeus abelii</name>
    <dbReference type="NCBI Taxonomy" id="9601"/>
    <lineage>
        <taxon>Eukaryota</taxon>
        <taxon>Metazoa</taxon>
        <taxon>Chordata</taxon>
        <taxon>Craniata</taxon>
        <taxon>Vertebrata</taxon>
        <taxon>Euteleostomi</taxon>
        <taxon>Mammalia</taxon>
        <taxon>Eutheria</taxon>
        <taxon>Euarchontoglires</taxon>
        <taxon>Primates</taxon>
        <taxon>Haplorrhini</taxon>
        <taxon>Catarrhini</taxon>
        <taxon>Hominidae</taxon>
        <taxon>Pongo</taxon>
    </lineage>
</organism>
<gene>
    <name type="primary">CEP63</name>
</gene>
<evidence type="ECO:0000250" key="1">
    <source>
        <dbReference type="UniProtKB" id="Q3UPP8"/>
    </source>
</evidence>
<evidence type="ECO:0000250" key="2">
    <source>
        <dbReference type="UniProtKB" id="Q96MT8"/>
    </source>
</evidence>
<evidence type="ECO:0000255" key="3"/>
<evidence type="ECO:0000256" key="4">
    <source>
        <dbReference type="SAM" id="MobiDB-lite"/>
    </source>
</evidence>
<evidence type="ECO:0000305" key="5"/>
<protein>
    <recommendedName>
        <fullName>Centrosomal protein of 63 kDa</fullName>
        <shortName>Cep63</shortName>
    </recommendedName>
</protein>
<feature type="chain" id="PRO_0000381805" description="Centrosomal protein of 63 kDa">
    <location>
        <begin position="1"/>
        <end position="541"/>
    </location>
</feature>
<feature type="region of interest" description="Disordered" evidence="4">
    <location>
        <begin position="294"/>
        <end position="324"/>
    </location>
</feature>
<feature type="coiled-coil region" evidence="3">
    <location>
        <begin position="22"/>
        <end position="199"/>
    </location>
</feature>
<feature type="coiled-coil region" evidence="3">
    <location>
        <begin position="242"/>
        <end position="305"/>
    </location>
</feature>
<feature type="coiled-coil region" evidence="3">
    <location>
        <begin position="346"/>
        <end position="485"/>
    </location>
</feature>
<feature type="coiled-coil region" evidence="3">
    <location>
        <begin position="514"/>
        <end position="541"/>
    </location>
</feature>
<feature type="compositionally biased region" description="Basic and acidic residues" evidence="4">
    <location>
        <begin position="307"/>
        <end position="321"/>
    </location>
</feature>
<feature type="modified residue" description="N-acetylmethionine" evidence="2">
    <location>
        <position position="1"/>
    </location>
</feature>
<feature type="modified residue" description="Phosphoserine" evidence="2">
    <location>
        <position position="278"/>
    </location>
</feature>
<reference key="1">
    <citation type="submission" date="2004-11" db="EMBL/GenBank/DDBJ databases">
        <authorList>
            <consortium name="The German cDNA consortium"/>
        </authorList>
    </citation>
    <scope>NUCLEOTIDE SEQUENCE [LARGE SCALE MRNA]</scope>
    <source>
        <tissue>Brain cortex</tissue>
    </source>
</reference>
<keyword id="KW-0007">Acetylation</keyword>
<keyword id="KW-0131">Cell cycle</keyword>
<keyword id="KW-0132">Cell division</keyword>
<keyword id="KW-0175">Coiled coil</keyword>
<keyword id="KW-0963">Cytoplasm</keyword>
<keyword id="KW-0206">Cytoskeleton</keyword>
<keyword id="KW-0227">DNA damage</keyword>
<keyword id="KW-0498">Mitosis</keyword>
<keyword id="KW-0597">Phosphoprotein</keyword>
<keyword id="KW-1185">Reference proteome</keyword>
<keyword id="KW-0832">Ubl conjugation</keyword>